<name>GATC_BARHE</name>
<dbReference type="EC" id="6.3.5.-" evidence="1"/>
<dbReference type="EMBL" id="BX897699">
    <property type="protein sequence ID" value="CAF27622.1"/>
    <property type="molecule type" value="Genomic_DNA"/>
</dbReference>
<dbReference type="RefSeq" id="WP_011180718.1">
    <property type="nucleotide sequence ID" value="NZ_LRIJ02000001.1"/>
</dbReference>
<dbReference type="SMR" id="Q6G3F0"/>
<dbReference type="PaxDb" id="283166-BH08230"/>
<dbReference type="EnsemblBacteria" id="CAF27622">
    <property type="protein sequence ID" value="CAF27622"/>
    <property type="gene ID" value="BH08230"/>
</dbReference>
<dbReference type="GeneID" id="92985513"/>
<dbReference type="KEGG" id="bhe:BH08230"/>
<dbReference type="eggNOG" id="COG0721">
    <property type="taxonomic scope" value="Bacteria"/>
</dbReference>
<dbReference type="OrthoDB" id="9794326at2"/>
<dbReference type="Proteomes" id="UP000000421">
    <property type="component" value="Chromosome"/>
</dbReference>
<dbReference type="GO" id="GO:0050566">
    <property type="term" value="F:asparaginyl-tRNA synthase (glutamine-hydrolyzing) activity"/>
    <property type="evidence" value="ECO:0007669"/>
    <property type="project" value="RHEA"/>
</dbReference>
<dbReference type="GO" id="GO:0005524">
    <property type="term" value="F:ATP binding"/>
    <property type="evidence" value="ECO:0007669"/>
    <property type="project" value="UniProtKB-KW"/>
</dbReference>
<dbReference type="GO" id="GO:0050567">
    <property type="term" value="F:glutaminyl-tRNA synthase (glutamine-hydrolyzing) activity"/>
    <property type="evidence" value="ECO:0007669"/>
    <property type="project" value="UniProtKB-UniRule"/>
</dbReference>
<dbReference type="GO" id="GO:0070681">
    <property type="term" value="P:glutaminyl-tRNAGln biosynthesis via transamidation"/>
    <property type="evidence" value="ECO:0007669"/>
    <property type="project" value="TreeGrafter"/>
</dbReference>
<dbReference type="GO" id="GO:0006450">
    <property type="term" value="P:regulation of translational fidelity"/>
    <property type="evidence" value="ECO:0007669"/>
    <property type="project" value="InterPro"/>
</dbReference>
<dbReference type="GO" id="GO:0006412">
    <property type="term" value="P:translation"/>
    <property type="evidence" value="ECO:0007669"/>
    <property type="project" value="UniProtKB-UniRule"/>
</dbReference>
<dbReference type="Gene3D" id="1.10.20.60">
    <property type="entry name" value="Glu-tRNAGln amidotransferase C subunit, N-terminal domain"/>
    <property type="match status" value="1"/>
</dbReference>
<dbReference type="HAMAP" id="MF_00122">
    <property type="entry name" value="GatC"/>
    <property type="match status" value="1"/>
</dbReference>
<dbReference type="InterPro" id="IPR036113">
    <property type="entry name" value="Asp/Glu-ADT_sf_sub_c"/>
</dbReference>
<dbReference type="InterPro" id="IPR003837">
    <property type="entry name" value="GatC"/>
</dbReference>
<dbReference type="NCBIfam" id="TIGR00135">
    <property type="entry name" value="gatC"/>
    <property type="match status" value="1"/>
</dbReference>
<dbReference type="PANTHER" id="PTHR15004">
    <property type="entry name" value="GLUTAMYL-TRNA(GLN) AMIDOTRANSFERASE SUBUNIT C, MITOCHONDRIAL"/>
    <property type="match status" value="1"/>
</dbReference>
<dbReference type="PANTHER" id="PTHR15004:SF0">
    <property type="entry name" value="GLUTAMYL-TRNA(GLN) AMIDOTRANSFERASE SUBUNIT C, MITOCHONDRIAL"/>
    <property type="match status" value="1"/>
</dbReference>
<dbReference type="Pfam" id="PF02686">
    <property type="entry name" value="GatC"/>
    <property type="match status" value="1"/>
</dbReference>
<dbReference type="SUPFAM" id="SSF141000">
    <property type="entry name" value="Glu-tRNAGln amidotransferase C subunit"/>
    <property type="match status" value="1"/>
</dbReference>
<evidence type="ECO:0000255" key="1">
    <source>
        <dbReference type="HAMAP-Rule" id="MF_00122"/>
    </source>
</evidence>
<organism>
    <name type="scientific">Bartonella henselae (strain ATCC 49882 / DSM 28221 / CCUG 30454 / Houston 1)</name>
    <name type="common">Rochalimaea henselae</name>
    <dbReference type="NCBI Taxonomy" id="283166"/>
    <lineage>
        <taxon>Bacteria</taxon>
        <taxon>Pseudomonadati</taxon>
        <taxon>Pseudomonadota</taxon>
        <taxon>Alphaproteobacteria</taxon>
        <taxon>Hyphomicrobiales</taxon>
        <taxon>Bartonellaceae</taxon>
        <taxon>Bartonella</taxon>
    </lineage>
</organism>
<sequence>MSVDQETVKRVSHLARIALHNDEVELMTKELNVILGFVEQLSEVDVSGVEPLTSVMPMTLRMREDSVTDGDKVADIVANAPVTEENFFLVSKVVE</sequence>
<feature type="chain" id="PRO_1000016074" description="Aspartyl/glutamyl-tRNA(Asn/Gln) amidotransferase subunit C">
    <location>
        <begin position="1"/>
        <end position="95"/>
    </location>
</feature>
<keyword id="KW-0067">ATP-binding</keyword>
<keyword id="KW-0436">Ligase</keyword>
<keyword id="KW-0547">Nucleotide-binding</keyword>
<keyword id="KW-0648">Protein biosynthesis</keyword>
<reference key="1">
    <citation type="journal article" date="2004" name="Proc. Natl. Acad. Sci. U.S.A.">
        <title>The louse-borne human pathogen Bartonella quintana is a genomic derivative of the zoonotic agent Bartonella henselae.</title>
        <authorList>
            <person name="Alsmark U.C.M."/>
            <person name="Frank A.C."/>
            <person name="Karlberg E.O."/>
            <person name="Legault B.-A."/>
            <person name="Ardell D.H."/>
            <person name="Canbaeck B."/>
            <person name="Eriksson A.-S."/>
            <person name="Naeslund A.K."/>
            <person name="Handley S.A."/>
            <person name="Huvet M."/>
            <person name="La Scola B."/>
            <person name="Holmberg M."/>
            <person name="Andersson S.G.E."/>
        </authorList>
    </citation>
    <scope>NUCLEOTIDE SEQUENCE [LARGE SCALE GENOMIC DNA]</scope>
    <source>
        <strain>ATCC 49882 / DSM 28221 / CCUG 30454 / Houston 1</strain>
    </source>
</reference>
<gene>
    <name evidence="1" type="primary">gatC</name>
    <name type="ordered locus">BH08230</name>
</gene>
<protein>
    <recommendedName>
        <fullName evidence="1">Aspartyl/glutamyl-tRNA(Asn/Gln) amidotransferase subunit C</fullName>
        <shortName evidence="1">Asp/Glu-ADT subunit C</shortName>
        <ecNumber evidence="1">6.3.5.-</ecNumber>
    </recommendedName>
</protein>
<comment type="function">
    <text evidence="1">Allows the formation of correctly charged Asn-tRNA(Asn) or Gln-tRNA(Gln) through the transamidation of misacylated Asp-tRNA(Asn) or Glu-tRNA(Gln) in organisms which lack either or both of asparaginyl-tRNA or glutaminyl-tRNA synthetases. The reaction takes place in the presence of glutamine and ATP through an activated phospho-Asp-tRNA(Asn) or phospho-Glu-tRNA(Gln).</text>
</comment>
<comment type="catalytic activity">
    <reaction evidence="1">
        <text>L-glutamyl-tRNA(Gln) + L-glutamine + ATP + H2O = L-glutaminyl-tRNA(Gln) + L-glutamate + ADP + phosphate + H(+)</text>
        <dbReference type="Rhea" id="RHEA:17521"/>
        <dbReference type="Rhea" id="RHEA-COMP:9681"/>
        <dbReference type="Rhea" id="RHEA-COMP:9684"/>
        <dbReference type="ChEBI" id="CHEBI:15377"/>
        <dbReference type="ChEBI" id="CHEBI:15378"/>
        <dbReference type="ChEBI" id="CHEBI:29985"/>
        <dbReference type="ChEBI" id="CHEBI:30616"/>
        <dbReference type="ChEBI" id="CHEBI:43474"/>
        <dbReference type="ChEBI" id="CHEBI:58359"/>
        <dbReference type="ChEBI" id="CHEBI:78520"/>
        <dbReference type="ChEBI" id="CHEBI:78521"/>
        <dbReference type="ChEBI" id="CHEBI:456216"/>
    </reaction>
</comment>
<comment type="catalytic activity">
    <reaction evidence="1">
        <text>L-aspartyl-tRNA(Asn) + L-glutamine + ATP + H2O = L-asparaginyl-tRNA(Asn) + L-glutamate + ADP + phosphate + 2 H(+)</text>
        <dbReference type="Rhea" id="RHEA:14513"/>
        <dbReference type="Rhea" id="RHEA-COMP:9674"/>
        <dbReference type="Rhea" id="RHEA-COMP:9677"/>
        <dbReference type="ChEBI" id="CHEBI:15377"/>
        <dbReference type="ChEBI" id="CHEBI:15378"/>
        <dbReference type="ChEBI" id="CHEBI:29985"/>
        <dbReference type="ChEBI" id="CHEBI:30616"/>
        <dbReference type="ChEBI" id="CHEBI:43474"/>
        <dbReference type="ChEBI" id="CHEBI:58359"/>
        <dbReference type="ChEBI" id="CHEBI:78515"/>
        <dbReference type="ChEBI" id="CHEBI:78516"/>
        <dbReference type="ChEBI" id="CHEBI:456216"/>
    </reaction>
</comment>
<comment type="subunit">
    <text evidence="1">Heterotrimer of A, B and C subunits.</text>
</comment>
<comment type="similarity">
    <text evidence="1">Belongs to the GatC family.</text>
</comment>
<accession>Q6G3F0</accession>
<proteinExistence type="inferred from homology"/>